<reference key="1">
    <citation type="journal article" date="1996" name="Nucleic Acids Res.">
        <title>Complete sequence analysis of the genome of the bacterium Mycoplasma pneumoniae.</title>
        <authorList>
            <person name="Himmelreich R."/>
            <person name="Hilbert H."/>
            <person name="Plagens H."/>
            <person name="Pirkl E."/>
            <person name="Li B.-C."/>
            <person name="Herrmann R."/>
        </authorList>
    </citation>
    <scope>NUCLEOTIDE SEQUENCE [LARGE SCALE GENOMIC DNA]</scope>
    <source>
        <strain>ATCC 29342 / M129 / Subtype 1</strain>
    </source>
</reference>
<accession>P75444</accession>
<organism>
    <name type="scientific">Mycoplasma pneumoniae (strain ATCC 29342 / M129 / Subtype 1)</name>
    <name type="common">Mycoplasmoides pneumoniae</name>
    <dbReference type="NCBI Taxonomy" id="272634"/>
    <lineage>
        <taxon>Bacteria</taxon>
        <taxon>Bacillati</taxon>
        <taxon>Mycoplasmatota</taxon>
        <taxon>Mycoplasmoidales</taxon>
        <taxon>Mycoplasmoidaceae</taxon>
        <taxon>Mycoplasmoides</taxon>
    </lineage>
</organism>
<sequence length="326" mass="37885">MSVTPIVEVKHLEKEFGFWRKNRILKDVNFAIMPGEFHAFIGQNGAGKTTTIKCLISSYQRFKDEINIDGISNKNAKSKGVISYIPEYAVFPKHLNTHEYLYTLGKLSGCSLQTIKEKVDYWLARFQIEHLRFKKPNDFSSGQKKKVLLIQALFNDPKLLIMDEPTANLDPKTRNEFMDVCYELNVRNKMAVFVSSHILAELENYCDSLTVIHEGEILFNGKTKNIAKDNFGYRLKVNNSDSLRKWLKAQKIAYKYFPATDDFQVDLKQKQSNKFAVELYQQPDFEVFIFARQGNSLQNIYNNLIEQYEYDQVQRAVAIREQDEAV</sequence>
<evidence type="ECO:0000255" key="1">
    <source>
        <dbReference type="PROSITE-ProRule" id="PRU00434"/>
    </source>
</evidence>
<evidence type="ECO:0000305" key="2"/>
<comment type="similarity">
    <text evidence="2">Belongs to the ABC transporter superfamily.</text>
</comment>
<keyword id="KW-0067">ATP-binding</keyword>
<keyword id="KW-0547">Nucleotide-binding</keyword>
<keyword id="KW-1185">Reference proteome</keyword>
<keyword id="KW-0813">Transport</keyword>
<dbReference type="EMBL" id="U00089">
    <property type="protein sequence ID" value="AAB96150.1"/>
    <property type="molecule type" value="Genomic_DNA"/>
</dbReference>
<dbReference type="PIR" id="S73828">
    <property type="entry name" value="S73828"/>
</dbReference>
<dbReference type="RefSeq" id="NP_110022.1">
    <property type="nucleotide sequence ID" value="NC_000912.1"/>
</dbReference>
<dbReference type="RefSeq" id="WP_010874690.1">
    <property type="nucleotide sequence ID" value="NZ_OU342337.1"/>
</dbReference>
<dbReference type="SMR" id="P75444"/>
<dbReference type="STRING" id="272634.MPN_334"/>
<dbReference type="EnsemblBacteria" id="AAB96150">
    <property type="protein sequence ID" value="AAB96150"/>
    <property type="gene ID" value="MPN_334"/>
</dbReference>
<dbReference type="KEGG" id="mpn:MPN_334"/>
<dbReference type="PATRIC" id="fig|272634.6.peg.358"/>
<dbReference type="HOGENOM" id="CLU_000604_1_2_14"/>
<dbReference type="OrthoDB" id="9775135at2"/>
<dbReference type="BioCyc" id="MPNE272634:G1GJ3-527-MONOMER"/>
<dbReference type="Proteomes" id="UP000000808">
    <property type="component" value="Chromosome"/>
</dbReference>
<dbReference type="GO" id="GO:0005524">
    <property type="term" value="F:ATP binding"/>
    <property type="evidence" value="ECO:0007669"/>
    <property type="project" value="UniProtKB-KW"/>
</dbReference>
<dbReference type="GO" id="GO:0016887">
    <property type="term" value="F:ATP hydrolysis activity"/>
    <property type="evidence" value="ECO:0007669"/>
    <property type="project" value="InterPro"/>
</dbReference>
<dbReference type="CDD" id="cd03230">
    <property type="entry name" value="ABC_DR_subfamily_A"/>
    <property type="match status" value="1"/>
</dbReference>
<dbReference type="Gene3D" id="3.40.50.300">
    <property type="entry name" value="P-loop containing nucleotide triphosphate hydrolases"/>
    <property type="match status" value="1"/>
</dbReference>
<dbReference type="InterPro" id="IPR003593">
    <property type="entry name" value="AAA+_ATPase"/>
</dbReference>
<dbReference type="InterPro" id="IPR003439">
    <property type="entry name" value="ABC_transporter-like_ATP-bd"/>
</dbReference>
<dbReference type="InterPro" id="IPR017871">
    <property type="entry name" value="ABC_transporter-like_CS"/>
</dbReference>
<dbReference type="InterPro" id="IPR051782">
    <property type="entry name" value="ABC_Transporter_VariousFunc"/>
</dbReference>
<dbReference type="InterPro" id="IPR027417">
    <property type="entry name" value="P-loop_NTPase"/>
</dbReference>
<dbReference type="PANTHER" id="PTHR42939">
    <property type="entry name" value="ABC TRANSPORTER ATP-BINDING PROTEIN ALBC-RELATED"/>
    <property type="match status" value="1"/>
</dbReference>
<dbReference type="PANTHER" id="PTHR42939:SF1">
    <property type="entry name" value="ABC TRANSPORTER ATP-BINDING PROTEIN ALBC-RELATED"/>
    <property type="match status" value="1"/>
</dbReference>
<dbReference type="Pfam" id="PF00005">
    <property type="entry name" value="ABC_tran"/>
    <property type="match status" value="1"/>
</dbReference>
<dbReference type="SMART" id="SM00382">
    <property type="entry name" value="AAA"/>
    <property type="match status" value="1"/>
</dbReference>
<dbReference type="SUPFAM" id="SSF52540">
    <property type="entry name" value="P-loop containing nucleoside triphosphate hydrolases"/>
    <property type="match status" value="1"/>
</dbReference>
<dbReference type="PROSITE" id="PS00211">
    <property type="entry name" value="ABC_TRANSPORTER_1"/>
    <property type="match status" value="1"/>
</dbReference>
<dbReference type="PROSITE" id="PS50893">
    <property type="entry name" value="ABC_TRANSPORTER_2"/>
    <property type="match status" value="1"/>
</dbReference>
<protein>
    <recommendedName>
        <fullName>Putative ABC transporter ATP-binding protein MPN_334</fullName>
    </recommendedName>
</protein>
<proteinExistence type="inferred from homology"/>
<gene>
    <name type="ordered locus">MPN_334</name>
    <name type="ORF">F10_orf326</name>
    <name type="ORF">MP502</name>
</gene>
<name>Y334_MYCPN</name>
<feature type="chain" id="PRO_0000093253" description="Putative ABC transporter ATP-binding protein MPN_334">
    <location>
        <begin position="1"/>
        <end position="326"/>
    </location>
</feature>
<feature type="domain" description="ABC transporter" evidence="1">
    <location>
        <begin position="7"/>
        <end position="239"/>
    </location>
</feature>
<feature type="binding site" evidence="1">
    <location>
        <begin position="42"/>
        <end position="49"/>
    </location>
    <ligand>
        <name>ATP</name>
        <dbReference type="ChEBI" id="CHEBI:30616"/>
    </ligand>
</feature>